<name>DNAK_PROM5</name>
<protein>
    <recommendedName>
        <fullName evidence="1">Chaperone protein DnaK</fullName>
    </recommendedName>
    <alternativeName>
        <fullName evidence="1">HSP70</fullName>
    </alternativeName>
    <alternativeName>
        <fullName evidence="1">Heat shock 70 kDa protein</fullName>
    </alternativeName>
    <alternativeName>
        <fullName evidence="1">Heat shock protein 70</fullName>
    </alternativeName>
</protein>
<comment type="function">
    <text evidence="1">Acts as a chaperone.</text>
</comment>
<comment type="induction">
    <text evidence="1">By stress conditions e.g. heat shock.</text>
</comment>
<comment type="similarity">
    <text evidence="1">Belongs to the heat shock protein 70 family.</text>
</comment>
<dbReference type="EMBL" id="CP000552">
    <property type="protein sequence ID" value="ABM73102.1"/>
    <property type="molecule type" value="Genomic_DNA"/>
</dbReference>
<dbReference type="RefSeq" id="WP_011821186.1">
    <property type="nucleotide sequence ID" value="NC_008817.1"/>
</dbReference>
<dbReference type="SMR" id="A2BZ91"/>
<dbReference type="STRING" id="167542.P9515_18951"/>
<dbReference type="GeneID" id="60200946"/>
<dbReference type="KEGG" id="pmc:P9515_18951"/>
<dbReference type="eggNOG" id="COG0443">
    <property type="taxonomic scope" value="Bacteria"/>
</dbReference>
<dbReference type="HOGENOM" id="CLU_005965_2_1_3"/>
<dbReference type="OrthoDB" id="9766019at2"/>
<dbReference type="Proteomes" id="UP000001589">
    <property type="component" value="Chromosome"/>
</dbReference>
<dbReference type="GO" id="GO:0005524">
    <property type="term" value="F:ATP binding"/>
    <property type="evidence" value="ECO:0007669"/>
    <property type="project" value="UniProtKB-UniRule"/>
</dbReference>
<dbReference type="GO" id="GO:0140662">
    <property type="term" value="F:ATP-dependent protein folding chaperone"/>
    <property type="evidence" value="ECO:0007669"/>
    <property type="project" value="InterPro"/>
</dbReference>
<dbReference type="GO" id="GO:0051082">
    <property type="term" value="F:unfolded protein binding"/>
    <property type="evidence" value="ECO:0007669"/>
    <property type="project" value="InterPro"/>
</dbReference>
<dbReference type="CDD" id="cd10234">
    <property type="entry name" value="ASKHA_NBD_HSP70_DnaK-like"/>
    <property type="match status" value="1"/>
</dbReference>
<dbReference type="FunFam" id="2.60.34.10:FF:000014">
    <property type="entry name" value="Chaperone protein DnaK HSP70"/>
    <property type="match status" value="1"/>
</dbReference>
<dbReference type="FunFam" id="1.20.1270.10:FF:000001">
    <property type="entry name" value="Molecular chaperone DnaK"/>
    <property type="match status" value="1"/>
</dbReference>
<dbReference type="FunFam" id="3.30.420.40:FF:000004">
    <property type="entry name" value="Molecular chaperone DnaK"/>
    <property type="match status" value="1"/>
</dbReference>
<dbReference type="FunFam" id="3.90.640.10:FF:000003">
    <property type="entry name" value="Molecular chaperone DnaK"/>
    <property type="match status" value="1"/>
</dbReference>
<dbReference type="Gene3D" id="1.20.1270.10">
    <property type="match status" value="1"/>
</dbReference>
<dbReference type="Gene3D" id="3.30.420.40">
    <property type="match status" value="2"/>
</dbReference>
<dbReference type="Gene3D" id="3.90.640.10">
    <property type="entry name" value="Actin, Chain A, domain 4"/>
    <property type="match status" value="1"/>
</dbReference>
<dbReference type="Gene3D" id="2.60.34.10">
    <property type="entry name" value="Substrate Binding Domain Of DNAk, Chain A, domain 1"/>
    <property type="match status" value="1"/>
</dbReference>
<dbReference type="HAMAP" id="MF_00332">
    <property type="entry name" value="DnaK"/>
    <property type="match status" value="1"/>
</dbReference>
<dbReference type="InterPro" id="IPR043129">
    <property type="entry name" value="ATPase_NBD"/>
</dbReference>
<dbReference type="InterPro" id="IPR012725">
    <property type="entry name" value="Chaperone_DnaK"/>
</dbReference>
<dbReference type="InterPro" id="IPR018181">
    <property type="entry name" value="Heat_shock_70_CS"/>
</dbReference>
<dbReference type="InterPro" id="IPR029048">
    <property type="entry name" value="HSP70_C_sf"/>
</dbReference>
<dbReference type="InterPro" id="IPR029047">
    <property type="entry name" value="HSP70_peptide-bd_sf"/>
</dbReference>
<dbReference type="InterPro" id="IPR013126">
    <property type="entry name" value="Hsp_70_fam"/>
</dbReference>
<dbReference type="NCBIfam" id="NF001413">
    <property type="entry name" value="PRK00290.1"/>
    <property type="match status" value="1"/>
</dbReference>
<dbReference type="NCBIfam" id="NF003520">
    <property type="entry name" value="PRK05183.1"/>
    <property type="match status" value="1"/>
</dbReference>
<dbReference type="NCBIfam" id="TIGR02350">
    <property type="entry name" value="prok_dnaK"/>
    <property type="match status" value="1"/>
</dbReference>
<dbReference type="PANTHER" id="PTHR19375">
    <property type="entry name" value="HEAT SHOCK PROTEIN 70KDA"/>
    <property type="match status" value="1"/>
</dbReference>
<dbReference type="Pfam" id="PF00012">
    <property type="entry name" value="HSP70"/>
    <property type="match status" value="1"/>
</dbReference>
<dbReference type="PRINTS" id="PR00301">
    <property type="entry name" value="HEATSHOCK70"/>
</dbReference>
<dbReference type="SUPFAM" id="SSF53067">
    <property type="entry name" value="Actin-like ATPase domain"/>
    <property type="match status" value="2"/>
</dbReference>
<dbReference type="SUPFAM" id="SSF100934">
    <property type="entry name" value="Heat shock protein 70kD (HSP70), C-terminal subdomain"/>
    <property type="match status" value="1"/>
</dbReference>
<dbReference type="SUPFAM" id="SSF100920">
    <property type="entry name" value="Heat shock protein 70kD (HSP70), peptide-binding domain"/>
    <property type="match status" value="1"/>
</dbReference>
<dbReference type="PROSITE" id="PS00297">
    <property type="entry name" value="HSP70_1"/>
    <property type="match status" value="1"/>
</dbReference>
<dbReference type="PROSITE" id="PS00329">
    <property type="entry name" value="HSP70_2"/>
    <property type="match status" value="1"/>
</dbReference>
<dbReference type="PROSITE" id="PS01036">
    <property type="entry name" value="HSP70_3"/>
    <property type="match status" value="1"/>
</dbReference>
<keyword id="KW-0067">ATP-binding</keyword>
<keyword id="KW-0143">Chaperone</keyword>
<keyword id="KW-0547">Nucleotide-binding</keyword>
<keyword id="KW-0597">Phosphoprotein</keyword>
<keyword id="KW-0346">Stress response</keyword>
<organism>
    <name type="scientific">Prochlorococcus marinus (strain MIT 9515)</name>
    <dbReference type="NCBI Taxonomy" id="167542"/>
    <lineage>
        <taxon>Bacteria</taxon>
        <taxon>Bacillati</taxon>
        <taxon>Cyanobacteriota</taxon>
        <taxon>Cyanophyceae</taxon>
        <taxon>Synechococcales</taxon>
        <taxon>Prochlorococcaceae</taxon>
        <taxon>Prochlorococcus</taxon>
    </lineage>
</organism>
<feature type="chain" id="PRO_1000059629" description="Chaperone protein DnaK">
    <location>
        <begin position="1"/>
        <end position="634"/>
    </location>
</feature>
<feature type="region of interest" description="Disordered" evidence="2">
    <location>
        <begin position="592"/>
        <end position="634"/>
    </location>
</feature>
<feature type="compositionally biased region" description="Acidic residues" evidence="2">
    <location>
        <begin position="619"/>
        <end position="634"/>
    </location>
</feature>
<feature type="modified residue" description="Phosphothreonine; by autocatalysis" evidence="1">
    <location>
        <position position="197"/>
    </location>
</feature>
<reference key="1">
    <citation type="journal article" date="2007" name="PLoS Genet.">
        <title>Patterns and implications of gene gain and loss in the evolution of Prochlorococcus.</title>
        <authorList>
            <person name="Kettler G.C."/>
            <person name="Martiny A.C."/>
            <person name="Huang K."/>
            <person name="Zucker J."/>
            <person name="Coleman M.L."/>
            <person name="Rodrigue S."/>
            <person name="Chen F."/>
            <person name="Lapidus A."/>
            <person name="Ferriera S."/>
            <person name="Johnson J."/>
            <person name="Steglich C."/>
            <person name="Church G.M."/>
            <person name="Richardson P."/>
            <person name="Chisholm S.W."/>
        </authorList>
    </citation>
    <scope>NUCLEOTIDE SEQUENCE [LARGE SCALE GENOMIC DNA]</scope>
    <source>
        <strain>MIT 9515</strain>
    </source>
</reference>
<evidence type="ECO:0000255" key="1">
    <source>
        <dbReference type="HAMAP-Rule" id="MF_00332"/>
    </source>
</evidence>
<evidence type="ECO:0000256" key="2">
    <source>
        <dbReference type="SAM" id="MobiDB-lite"/>
    </source>
</evidence>
<accession>A2BZ91</accession>
<sequence>MGKVVGIDLGTTNSCVAVMEGGKPTVIANAEGFRTTPSVVAYTKNQDQLVGQIAKRQAVMNPENTFYSAKRFVGRRVDEVNEESKDVSYGIEKAGSNVKLKCPVLDKQFSPEEVSAQVLRKLSEDAGKYLGENITQAVITVPAYFNDSQRQATKDAGKIAGLEVLRIINEPTAAALAYGLDKKSNERILVFDLGGGTFDVSVLEVGDGVFEVLSTSGDTHLGGDDFDRCIVNHLASVFKSNEGIDLREDKQALQRLTEAAEKAKIELSNATQSEINLPFITATPDGPKHLDLNLTRANFEELASKLIDRCRVPVEQALKDAKLSTGEIDEIVMVGGSTRMPAVQELVKRVTGKDPNQTVNPDEVVAVGAAIQGGVLAGEVKDILLLDVTPLSLGVETLGGVMTKMITRNTTVPTKKSETYSTAVDGQTNVEIHVLQGEREMASDNKSLGTFRLDGIPSAPRGVPQIEVTFDIDANGILSVTAKDKGSGKEQSISITGASTLSDNEVDKMVKDAESNASVDKEKREKIDLKNQAETLVYQTEKQLGELGDKVDDSAKAKVEEKSKALKEATSKEDYDSMKKLLEELQQELYAIGSSVYQQPGNQPPAPGGPNANASDDKGPDDDVIDADFTETKD</sequence>
<gene>
    <name evidence="1" type="primary">dnaK</name>
    <name type="ordered locus">P9515_18951</name>
</gene>
<proteinExistence type="inferred from homology"/>